<gene>
    <name type="primary">nodB</name>
</gene>
<reference key="1">
    <citation type="journal article" date="1999" name="FEMS Microbiol. Lett.">
        <title>Identification of nodulation promoter (nod-box) regions of Rhizobium galegae.</title>
        <authorList>
            <person name="Suominen L."/>
            <person name="Paulin L."/>
            <person name="Saano A."/>
            <person name="Saren A.-M."/>
            <person name="Tas E."/>
            <person name="Lindstroem K."/>
        </authorList>
    </citation>
    <scope>NUCLEOTIDE SEQUENCE [GENOMIC DNA]</scope>
    <source>
        <strain>HAMBI 1174</strain>
    </source>
</reference>
<dbReference type="EC" id="3.5.1.-"/>
<dbReference type="EMBL" id="X87578">
    <property type="protein sequence ID" value="CAA60878.1"/>
    <property type="molecule type" value="Genomic_DNA"/>
</dbReference>
<dbReference type="SMR" id="P50354"/>
<dbReference type="GO" id="GO:0005737">
    <property type="term" value="C:cytoplasm"/>
    <property type="evidence" value="ECO:0007669"/>
    <property type="project" value="UniProtKB-SubCell"/>
</dbReference>
<dbReference type="GO" id="GO:0016020">
    <property type="term" value="C:membrane"/>
    <property type="evidence" value="ECO:0007669"/>
    <property type="project" value="TreeGrafter"/>
</dbReference>
<dbReference type="GO" id="GO:0016810">
    <property type="term" value="F:hydrolase activity, acting on carbon-nitrogen (but not peptide) bonds"/>
    <property type="evidence" value="ECO:0007669"/>
    <property type="project" value="InterPro"/>
</dbReference>
<dbReference type="GO" id="GO:0046872">
    <property type="term" value="F:metal ion binding"/>
    <property type="evidence" value="ECO:0007669"/>
    <property type="project" value="UniProtKB-KW"/>
</dbReference>
<dbReference type="GO" id="GO:0005975">
    <property type="term" value="P:carbohydrate metabolic process"/>
    <property type="evidence" value="ECO:0007669"/>
    <property type="project" value="InterPro"/>
</dbReference>
<dbReference type="Gene3D" id="3.20.20.370">
    <property type="entry name" value="Glycoside hydrolase/deacetylase"/>
    <property type="match status" value="1"/>
</dbReference>
<dbReference type="InterPro" id="IPR011330">
    <property type="entry name" value="Glyco_hydro/deAcase_b/a-brl"/>
</dbReference>
<dbReference type="InterPro" id="IPR002509">
    <property type="entry name" value="NODB_dom"/>
</dbReference>
<dbReference type="InterPro" id="IPR026402">
    <property type="entry name" value="Nodulat_NodB"/>
</dbReference>
<dbReference type="InterPro" id="IPR050248">
    <property type="entry name" value="Polysacc_deacetylase_ArnD"/>
</dbReference>
<dbReference type="NCBIfam" id="TIGR04243">
    <property type="entry name" value="nodulat_NodB"/>
    <property type="match status" value="1"/>
</dbReference>
<dbReference type="PANTHER" id="PTHR10587:SF133">
    <property type="entry name" value="CHITIN DEACETYLASE 1-RELATED"/>
    <property type="match status" value="1"/>
</dbReference>
<dbReference type="PANTHER" id="PTHR10587">
    <property type="entry name" value="GLYCOSYL TRANSFERASE-RELATED"/>
    <property type="match status" value="1"/>
</dbReference>
<dbReference type="Pfam" id="PF01522">
    <property type="entry name" value="Polysacc_deac_1"/>
    <property type="match status" value="1"/>
</dbReference>
<dbReference type="SUPFAM" id="SSF88713">
    <property type="entry name" value="Glycoside hydrolase/deacetylase"/>
    <property type="match status" value="1"/>
</dbReference>
<dbReference type="PROSITE" id="PS51677">
    <property type="entry name" value="NODB"/>
    <property type="match status" value="1"/>
</dbReference>
<accession>P50354</accession>
<feature type="chain" id="PRO_0000172750" description="Chitooligosaccharide deacetylase">
    <location>
        <begin position="1"/>
        <end position="214"/>
    </location>
</feature>
<feature type="domain" description="NodB homology" evidence="2">
    <location>
        <begin position="19"/>
        <end position="211"/>
    </location>
</feature>
<feature type="active site" description="Proton acceptor" evidence="1">
    <location>
        <position position="26"/>
    </location>
</feature>
<feature type="active site" description="Proton donor" evidence="1">
    <location>
        <position position="172"/>
    </location>
</feature>
<feature type="binding site" evidence="1">
    <location>
        <position position="77"/>
    </location>
    <ligand>
        <name>a divalent metal cation</name>
        <dbReference type="ChEBI" id="CHEBI:60240"/>
    </ligand>
</feature>
<feature type="binding site" evidence="1">
    <location>
        <position position="81"/>
    </location>
    <ligand>
        <name>a divalent metal cation</name>
        <dbReference type="ChEBI" id="CHEBI:60240"/>
    </ligand>
</feature>
<feature type="site" description="Raises pKa of active site His" evidence="1">
    <location>
        <position position="146"/>
    </location>
</feature>
<organism>
    <name type="scientific">Neorhizobium galegae</name>
    <name type="common">Rhizobium galegae</name>
    <dbReference type="NCBI Taxonomy" id="399"/>
    <lineage>
        <taxon>Bacteria</taxon>
        <taxon>Pseudomonadati</taxon>
        <taxon>Pseudomonadota</taxon>
        <taxon>Alphaproteobacteria</taxon>
        <taxon>Hyphomicrobiales</taxon>
        <taxon>Rhizobiaceae</taxon>
        <taxon>Rhizobium/Agrobacterium group</taxon>
        <taxon>Neorhizobium</taxon>
    </lineage>
</organism>
<protein>
    <recommendedName>
        <fullName>Chitooligosaccharide deacetylase</fullName>
        <ecNumber>3.5.1.-</ecNumber>
    </recommendedName>
    <alternativeName>
        <fullName>Nodulation protein B</fullName>
    </alternativeName>
</protein>
<keyword id="KW-0963">Cytoplasm</keyword>
<keyword id="KW-0378">Hydrolase</keyword>
<keyword id="KW-0479">Metal-binding</keyword>
<keyword id="KW-0536">Nodulation</keyword>
<evidence type="ECO:0000250" key="1"/>
<evidence type="ECO:0000255" key="2">
    <source>
        <dbReference type="PROSITE-ProRule" id="PRU01014"/>
    </source>
</evidence>
<evidence type="ECO:0000305" key="3"/>
<sequence length="214" mass="22779">MKNLNIIDSVDVDAGADDPCVYLTFDDGPNPFCTPHILDVLAQHAVSATFFVIGANAEVHPGLVQRIVSEGHGVANHTMTHPDLATCSRPQVEREIDEANRAIISACPGASIRHIRAPYGKWTEEALVKSASLGLAPVHWSVDPRDWSCPGVDAIVDRVLAAAKPGSIVLLHEDGPPGAADPTKLPTLRDQTLAAISAIIKSLRSRGLTIRSLP</sequence>
<proteinExistence type="inferred from homology"/>
<name>NODB_NEOGA</name>
<comment type="function">
    <text>Is involved in generating a small heat-stable compound (Nod), an acylated oligomer of N-acetylglucosamine, that stimulates mitosis in various plant protoplasts.</text>
</comment>
<comment type="subcellular location">
    <subcellularLocation>
        <location>Cytoplasm</location>
    </subcellularLocation>
</comment>
<comment type="similarity">
    <text evidence="3">Belongs to the polysaccharide deacetylase family.</text>
</comment>